<gene>
    <name evidence="1" type="primary">mobA</name>
    <name type="ordered locus">Bcen2424_1108</name>
</gene>
<protein>
    <recommendedName>
        <fullName evidence="1">Molybdenum cofactor guanylyltransferase</fullName>
        <shortName evidence="1">MoCo guanylyltransferase</shortName>
        <ecNumber evidence="1">2.7.7.77</ecNumber>
    </recommendedName>
    <alternativeName>
        <fullName evidence="1">GTP:molybdopterin guanylyltransferase</fullName>
    </alternativeName>
    <alternativeName>
        <fullName evidence="1">Mo-MPT guanylyltransferase</fullName>
    </alternativeName>
    <alternativeName>
        <fullName evidence="1">Molybdopterin guanylyltransferase</fullName>
    </alternativeName>
    <alternativeName>
        <fullName evidence="1">Molybdopterin-guanine dinucleotide synthase</fullName>
        <shortName evidence="1">MGD synthase</shortName>
    </alternativeName>
</protein>
<dbReference type="EC" id="2.7.7.77" evidence="1"/>
<dbReference type="EMBL" id="CP000458">
    <property type="protein sequence ID" value="ABK07861.1"/>
    <property type="molecule type" value="Genomic_DNA"/>
</dbReference>
<dbReference type="RefSeq" id="WP_011544927.1">
    <property type="nucleotide sequence ID" value="NC_008542.1"/>
</dbReference>
<dbReference type="SMR" id="A0K5T4"/>
<dbReference type="KEGG" id="bch:Bcen2424_1108"/>
<dbReference type="HOGENOM" id="CLU_055597_5_1_4"/>
<dbReference type="GO" id="GO:0005737">
    <property type="term" value="C:cytoplasm"/>
    <property type="evidence" value="ECO:0007669"/>
    <property type="project" value="UniProtKB-SubCell"/>
</dbReference>
<dbReference type="GO" id="GO:0005525">
    <property type="term" value="F:GTP binding"/>
    <property type="evidence" value="ECO:0007669"/>
    <property type="project" value="UniProtKB-UniRule"/>
</dbReference>
<dbReference type="GO" id="GO:0046872">
    <property type="term" value="F:metal ion binding"/>
    <property type="evidence" value="ECO:0007669"/>
    <property type="project" value="UniProtKB-KW"/>
</dbReference>
<dbReference type="GO" id="GO:0061603">
    <property type="term" value="F:molybdenum cofactor guanylyltransferase activity"/>
    <property type="evidence" value="ECO:0007669"/>
    <property type="project" value="UniProtKB-EC"/>
</dbReference>
<dbReference type="GO" id="GO:1902758">
    <property type="term" value="P:bis(molybdopterin guanine dinucleotide)molybdenum biosynthetic process"/>
    <property type="evidence" value="ECO:0007669"/>
    <property type="project" value="TreeGrafter"/>
</dbReference>
<dbReference type="CDD" id="cd02503">
    <property type="entry name" value="MobA"/>
    <property type="match status" value="1"/>
</dbReference>
<dbReference type="Gene3D" id="3.90.550.10">
    <property type="entry name" value="Spore Coat Polysaccharide Biosynthesis Protein SpsA, Chain A"/>
    <property type="match status" value="1"/>
</dbReference>
<dbReference type="HAMAP" id="MF_00316">
    <property type="entry name" value="MobA"/>
    <property type="match status" value="1"/>
</dbReference>
<dbReference type="InterPro" id="IPR025877">
    <property type="entry name" value="MobA-like_NTP_Trfase"/>
</dbReference>
<dbReference type="InterPro" id="IPR013482">
    <property type="entry name" value="Molybde_CF_guanTrfase"/>
</dbReference>
<dbReference type="InterPro" id="IPR029044">
    <property type="entry name" value="Nucleotide-diphossugar_trans"/>
</dbReference>
<dbReference type="NCBIfam" id="TIGR02665">
    <property type="entry name" value="molyb_mobA"/>
    <property type="match status" value="1"/>
</dbReference>
<dbReference type="PANTHER" id="PTHR19136">
    <property type="entry name" value="MOLYBDENUM COFACTOR GUANYLYLTRANSFERASE"/>
    <property type="match status" value="1"/>
</dbReference>
<dbReference type="PANTHER" id="PTHR19136:SF81">
    <property type="entry name" value="MOLYBDENUM COFACTOR GUANYLYLTRANSFERASE"/>
    <property type="match status" value="1"/>
</dbReference>
<dbReference type="Pfam" id="PF12804">
    <property type="entry name" value="NTP_transf_3"/>
    <property type="match status" value="1"/>
</dbReference>
<dbReference type="SUPFAM" id="SSF53448">
    <property type="entry name" value="Nucleotide-diphospho-sugar transferases"/>
    <property type="match status" value="1"/>
</dbReference>
<keyword id="KW-0963">Cytoplasm</keyword>
<keyword id="KW-0342">GTP-binding</keyword>
<keyword id="KW-0460">Magnesium</keyword>
<keyword id="KW-0479">Metal-binding</keyword>
<keyword id="KW-0501">Molybdenum cofactor biosynthesis</keyword>
<keyword id="KW-0547">Nucleotide-binding</keyword>
<keyword id="KW-0808">Transferase</keyword>
<proteinExistence type="inferred from homology"/>
<evidence type="ECO:0000255" key="1">
    <source>
        <dbReference type="HAMAP-Rule" id="MF_00316"/>
    </source>
</evidence>
<sequence length="205" mass="22191">MPAPAFPSIAGLLLAGGRATRMDGVDKGLQLLDGTPLALHVLRRLTPQVDETLISANRHADRYAELSAPFDARIIADETPDFPGPLAGLLAGMRAARAPLVACSPCDTPYLPVDLVARLRAALDAQQADIAMAVTVDAQQVRSPQPTFALLRTSLADDLAARLAAGDRKVRAWYARHKTVEVEFRDERAFYNANSWQELAALARR</sequence>
<feature type="chain" id="PRO_1000019109" description="Molybdenum cofactor guanylyltransferase">
    <location>
        <begin position="1"/>
        <end position="205"/>
    </location>
</feature>
<feature type="binding site" evidence="1">
    <location>
        <begin position="14"/>
        <end position="16"/>
    </location>
    <ligand>
        <name>GTP</name>
        <dbReference type="ChEBI" id="CHEBI:37565"/>
    </ligand>
</feature>
<feature type="binding site" evidence="1">
    <location>
        <position position="27"/>
    </location>
    <ligand>
        <name>GTP</name>
        <dbReference type="ChEBI" id="CHEBI:37565"/>
    </ligand>
</feature>
<feature type="binding site" evidence="1">
    <location>
        <position position="77"/>
    </location>
    <ligand>
        <name>GTP</name>
        <dbReference type="ChEBI" id="CHEBI:37565"/>
    </ligand>
</feature>
<feature type="binding site" evidence="1">
    <location>
        <position position="107"/>
    </location>
    <ligand>
        <name>GTP</name>
        <dbReference type="ChEBI" id="CHEBI:37565"/>
    </ligand>
</feature>
<feature type="binding site" evidence="1">
    <location>
        <position position="107"/>
    </location>
    <ligand>
        <name>Mg(2+)</name>
        <dbReference type="ChEBI" id="CHEBI:18420"/>
    </ligand>
</feature>
<comment type="function">
    <text evidence="1">Transfers a GMP moiety from GTP to Mo-molybdopterin (Mo-MPT) cofactor (Moco or molybdenum cofactor) to form Mo-molybdopterin guanine dinucleotide (Mo-MGD) cofactor.</text>
</comment>
<comment type="catalytic activity">
    <reaction evidence="1">
        <text>Mo-molybdopterin + GTP + H(+) = Mo-molybdopterin guanine dinucleotide + diphosphate</text>
        <dbReference type="Rhea" id="RHEA:34243"/>
        <dbReference type="ChEBI" id="CHEBI:15378"/>
        <dbReference type="ChEBI" id="CHEBI:33019"/>
        <dbReference type="ChEBI" id="CHEBI:37565"/>
        <dbReference type="ChEBI" id="CHEBI:71302"/>
        <dbReference type="ChEBI" id="CHEBI:71310"/>
        <dbReference type="EC" id="2.7.7.77"/>
    </reaction>
</comment>
<comment type="cofactor">
    <cofactor evidence="1">
        <name>Mg(2+)</name>
        <dbReference type="ChEBI" id="CHEBI:18420"/>
    </cofactor>
</comment>
<comment type="subunit">
    <text evidence="1">Monomer.</text>
</comment>
<comment type="subcellular location">
    <subcellularLocation>
        <location evidence="1">Cytoplasm</location>
    </subcellularLocation>
</comment>
<comment type="domain">
    <text evidence="1">The N-terminal domain determines nucleotide recognition and specific binding, while the C-terminal domain determines the specific binding to the target protein.</text>
</comment>
<comment type="similarity">
    <text evidence="1">Belongs to the MobA family.</text>
</comment>
<reference key="1">
    <citation type="submission" date="2006-08" db="EMBL/GenBank/DDBJ databases">
        <title>Complete sequence of chromosome 1 of Burkholderia cenocepacia HI2424.</title>
        <authorList>
            <person name="Copeland A."/>
            <person name="Lucas S."/>
            <person name="Lapidus A."/>
            <person name="Barry K."/>
            <person name="Detter J.C."/>
            <person name="Glavina del Rio T."/>
            <person name="Hammon N."/>
            <person name="Israni S."/>
            <person name="Pitluck S."/>
            <person name="Chain P."/>
            <person name="Malfatti S."/>
            <person name="Shin M."/>
            <person name="Vergez L."/>
            <person name="Schmutz J."/>
            <person name="Larimer F."/>
            <person name="Land M."/>
            <person name="Hauser L."/>
            <person name="Kyrpides N."/>
            <person name="Kim E."/>
            <person name="LiPuma J.J."/>
            <person name="Gonzalez C.F."/>
            <person name="Konstantinidis K."/>
            <person name="Tiedje J.M."/>
            <person name="Richardson P."/>
        </authorList>
    </citation>
    <scope>NUCLEOTIDE SEQUENCE [LARGE SCALE GENOMIC DNA]</scope>
    <source>
        <strain>HI2424</strain>
    </source>
</reference>
<accession>A0K5T4</accession>
<name>MOBA_BURCH</name>
<organism>
    <name type="scientific">Burkholderia cenocepacia (strain HI2424)</name>
    <dbReference type="NCBI Taxonomy" id="331272"/>
    <lineage>
        <taxon>Bacteria</taxon>
        <taxon>Pseudomonadati</taxon>
        <taxon>Pseudomonadota</taxon>
        <taxon>Betaproteobacteria</taxon>
        <taxon>Burkholderiales</taxon>
        <taxon>Burkholderiaceae</taxon>
        <taxon>Burkholderia</taxon>
        <taxon>Burkholderia cepacia complex</taxon>
    </lineage>
</organism>